<protein>
    <recommendedName>
        <fullName evidence="1">Large ribosomal subunit protein uL4</fullName>
    </recommendedName>
    <alternativeName>
        <fullName evidence="3">50S ribosomal protein L4</fullName>
    </alternativeName>
</protein>
<proteinExistence type="inferred from homology"/>
<name>RL4_GEOUR</name>
<sequence>MAKLDVFDIKNKKVGEIELSDSVFNDEVKEYLIHEAVKIQLANRRAGTVGVKNRSAVAGSGKKPFKQKGTGQARQGCRRAPQYPGGGVAFGPQAKTYNLSMNKKARRAAMRSALSLLFKNNKLTVLNNIDLDNVSTKNFVGILNGFTLDKTLVVTDVENRNLELSARNVKNVKVLKSEGLNIFDIMKYQSVIFTENSVRKVEGALQS</sequence>
<reference key="1">
    <citation type="submission" date="2007-05" db="EMBL/GenBank/DDBJ databases">
        <title>Complete sequence of Geobacter uraniireducens Rf4.</title>
        <authorList>
            <consortium name="US DOE Joint Genome Institute"/>
            <person name="Copeland A."/>
            <person name="Lucas S."/>
            <person name="Lapidus A."/>
            <person name="Barry K."/>
            <person name="Detter J.C."/>
            <person name="Glavina del Rio T."/>
            <person name="Hammon N."/>
            <person name="Israni S."/>
            <person name="Dalin E."/>
            <person name="Tice H."/>
            <person name="Pitluck S."/>
            <person name="Chertkov O."/>
            <person name="Brettin T."/>
            <person name="Bruce D."/>
            <person name="Han C."/>
            <person name="Schmutz J."/>
            <person name="Larimer F."/>
            <person name="Land M."/>
            <person name="Hauser L."/>
            <person name="Kyrpides N."/>
            <person name="Mikhailova N."/>
            <person name="Shelobolina E."/>
            <person name="Aklujkar M."/>
            <person name="Lovley D."/>
            <person name="Richardson P."/>
        </authorList>
    </citation>
    <scope>NUCLEOTIDE SEQUENCE [LARGE SCALE GENOMIC DNA]</scope>
    <source>
        <strain>ATCC BAA-1134 / JCM 13001 / Rf4</strain>
    </source>
</reference>
<dbReference type="EMBL" id="CP000698">
    <property type="protein sequence ID" value="ABQ25274.1"/>
    <property type="molecule type" value="Genomic_DNA"/>
</dbReference>
<dbReference type="RefSeq" id="WP_011937997.1">
    <property type="nucleotide sequence ID" value="NC_009483.1"/>
</dbReference>
<dbReference type="SMR" id="A5GAW6"/>
<dbReference type="STRING" id="351605.Gura_1068"/>
<dbReference type="KEGG" id="gur:Gura_1068"/>
<dbReference type="HOGENOM" id="CLU_041575_5_2_7"/>
<dbReference type="OrthoDB" id="9803201at2"/>
<dbReference type="Proteomes" id="UP000006695">
    <property type="component" value="Chromosome"/>
</dbReference>
<dbReference type="GO" id="GO:1990904">
    <property type="term" value="C:ribonucleoprotein complex"/>
    <property type="evidence" value="ECO:0007669"/>
    <property type="project" value="UniProtKB-KW"/>
</dbReference>
<dbReference type="GO" id="GO:0005840">
    <property type="term" value="C:ribosome"/>
    <property type="evidence" value="ECO:0007669"/>
    <property type="project" value="UniProtKB-KW"/>
</dbReference>
<dbReference type="GO" id="GO:0019843">
    <property type="term" value="F:rRNA binding"/>
    <property type="evidence" value="ECO:0007669"/>
    <property type="project" value="UniProtKB-UniRule"/>
</dbReference>
<dbReference type="GO" id="GO:0003735">
    <property type="term" value="F:structural constituent of ribosome"/>
    <property type="evidence" value="ECO:0007669"/>
    <property type="project" value="InterPro"/>
</dbReference>
<dbReference type="GO" id="GO:0006412">
    <property type="term" value="P:translation"/>
    <property type="evidence" value="ECO:0007669"/>
    <property type="project" value="UniProtKB-UniRule"/>
</dbReference>
<dbReference type="Gene3D" id="3.40.1370.10">
    <property type="match status" value="1"/>
</dbReference>
<dbReference type="HAMAP" id="MF_01328_B">
    <property type="entry name" value="Ribosomal_uL4_B"/>
    <property type="match status" value="1"/>
</dbReference>
<dbReference type="InterPro" id="IPR002136">
    <property type="entry name" value="Ribosomal_uL4"/>
</dbReference>
<dbReference type="InterPro" id="IPR013005">
    <property type="entry name" value="Ribosomal_uL4-like"/>
</dbReference>
<dbReference type="InterPro" id="IPR023574">
    <property type="entry name" value="Ribosomal_uL4_dom_sf"/>
</dbReference>
<dbReference type="NCBIfam" id="TIGR03953">
    <property type="entry name" value="rplD_bact"/>
    <property type="match status" value="1"/>
</dbReference>
<dbReference type="PANTHER" id="PTHR10746">
    <property type="entry name" value="50S RIBOSOMAL PROTEIN L4"/>
    <property type="match status" value="1"/>
</dbReference>
<dbReference type="PANTHER" id="PTHR10746:SF6">
    <property type="entry name" value="LARGE RIBOSOMAL SUBUNIT PROTEIN UL4M"/>
    <property type="match status" value="1"/>
</dbReference>
<dbReference type="Pfam" id="PF00573">
    <property type="entry name" value="Ribosomal_L4"/>
    <property type="match status" value="1"/>
</dbReference>
<dbReference type="SUPFAM" id="SSF52166">
    <property type="entry name" value="Ribosomal protein L4"/>
    <property type="match status" value="1"/>
</dbReference>
<keyword id="KW-1185">Reference proteome</keyword>
<keyword id="KW-0687">Ribonucleoprotein</keyword>
<keyword id="KW-0689">Ribosomal protein</keyword>
<keyword id="KW-0694">RNA-binding</keyword>
<keyword id="KW-0699">rRNA-binding</keyword>
<accession>A5GAW6</accession>
<organism>
    <name type="scientific">Geotalea uraniireducens (strain Rf4)</name>
    <name type="common">Geobacter uraniireducens</name>
    <dbReference type="NCBI Taxonomy" id="351605"/>
    <lineage>
        <taxon>Bacteria</taxon>
        <taxon>Pseudomonadati</taxon>
        <taxon>Thermodesulfobacteriota</taxon>
        <taxon>Desulfuromonadia</taxon>
        <taxon>Geobacterales</taxon>
        <taxon>Geobacteraceae</taxon>
        <taxon>Geotalea</taxon>
    </lineage>
</organism>
<feature type="chain" id="PRO_1000086522" description="Large ribosomal subunit protein uL4">
    <location>
        <begin position="1"/>
        <end position="207"/>
    </location>
</feature>
<feature type="region of interest" description="Disordered" evidence="2">
    <location>
        <begin position="58"/>
        <end position="85"/>
    </location>
</feature>
<gene>
    <name evidence="1" type="primary">rplD</name>
    <name type="ordered locus">Gura_1068</name>
</gene>
<evidence type="ECO:0000255" key="1">
    <source>
        <dbReference type="HAMAP-Rule" id="MF_01328"/>
    </source>
</evidence>
<evidence type="ECO:0000256" key="2">
    <source>
        <dbReference type="SAM" id="MobiDB-lite"/>
    </source>
</evidence>
<evidence type="ECO:0000305" key="3"/>
<comment type="function">
    <text evidence="1">One of the primary rRNA binding proteins, this protein initially binds near the 5'-end of the 23S rRNA. It is important during the early stages of 50S assembly. It makes multiple contacts with different domains of the 23S rRNA in the assembled 50S subunit and ribosome.</text>
</comment>
<comment type="function">
    <text evidence="1">Forms part of the polypeptide exit tunnel.</text>
</comment>
<comment type="subunit">
    <text evidence="1">Part of the 50S ribosomal subunit.</text>
</comment>
<comment type="similarity">
    <text evidence="1">Belongs to the universal ribosomal protein uL4 family.</text>
</comment>